<evidence type="ECO:0000255" key="1">
    <source>
        <dbReference type="PROSITE-ProRule" id="PRU00270"/>
    </source>
</evidence>
<evidence type="ECO:0007829" key="2">
    <source>
        <dbReference type="PDB" id="1T6M"/>
    </source>
</evidence>
<evidence type="ECO:0007829" key="3">
    <source>
        <dbReference type="PDB" id="2OR2"/>
    </source>
</evidence>
<evidence type="ECO:0007829" key="4">
    <source>
        <dbReference type="PDB" id="3EA1"/>
    </source>
</evidence>
<organism>
    <name type="scientific">Bacillus thuringiensis</name>
    <dbReference type="NCBI Taxonomy" id="1428"/>
    <lineage>
        <taxon>Bacteria</taxon>
        <taxon>Bacillati</taxon>
        <taxon>Bacillota</taxon>
        <taxon>Bacilli</taxon>
        <taxon>Bacillales</taxon>
        <taxon>Bacillaceae</taxon>
        <taxon>Bacillus</taxon>
        <taxon>Bacillus cereus group</taxon>
    </lineage>
</organism>
<dbReference type="EC" id="4.6.1.13"/>
<dbReference type="EMBL" id="X12952">
    <property type="protein sequence ID" value="CAA31410.1"/>
    <property type="molecule type" value="Genomic_DNA"/>
</dbReference>
<dbReference type="EMBL" id="X14178">
    <property type="protein sequence ID" value="CAA32378.1"/>
    <property type="molecule type" value="Genomic_DNA"/>
</dbReference>
<dbReference type="PIR" id="A30760">
    <property type="entry name" value="A30760"/>
</dbReference>
<dbReference type="RefSeq" id="WP_000066296.1">
    <property type="nucleotide sequence ID" value="NZ_VLJE01000127.1"/>
</dbReference>
<dbReference type="PDB" id="1T6M">
    <property type="method" value="X-ray"/>
    <property type="resolution" value="2.11 A"/>
    <property type="chains" value="A/B=32-329"/>
</dbReference>
<dbReference type="PDB" id="2OR2">
    <property type="method" value="X-ray"/>
    <property type="resolution" value="1.84 A"/>
    <property type="chains" value="A/B=32-327"/>
</dbReference>
<dbReference type="PDB" id="3EA1">
    <property type="method" value="X-ray"/>
    <property type="resolution" value="1.75 A"/>
    <property type="chains" value="A/B=32-329"/>
</dbReference>
<dbReference type="PDB" id="3EA2">
    <property type="method" value="X-ray"/>
    <property type="resolution" value="1.95 A"/>
    <property type="chains" value="A/B=32-329"/>
</dbReference>
<dbReference type="PDB" id="3EA3">
    <property type="method" value="X-ray"/>
    <property type="resolution" value="1.78 A"/>
    <property type="chains" value="A/B=32-329"/>
</dbReference>
<dbReference type="PDBsum" id="1T6M"/>
<dbReference type="PDBsum" id="2OR2"/>
<dbReference type="PDBsum" id="3EA1"/>
<dbReference type="PDBsum" id="3EA2"/>
<dbReference type="PDBsum" id="3EA3"/>
<dbReference type="SMR" id="P08954"/>
<dbReference type="GeneID" id="67467973"/>
<dbReference type="BRENDA" id="4.6.1.13">
    <property type="organism ID" value="711"/>
</dbReference>
<dbReference type="SABIO-RK" id="P08954"/>
<dbReference type="EvolutionaryTrace" id="P08954"/>
<dbReference type="GO" id="GO:0005576">
    <property type="term" value="C:extracellular region"/>
    <property type="evidence" value="ECO:0007669"/>
    <property type="project" value="UniProtKB-SubCell"/>
</dbReference>
<dbReference type="GO" id="GO:0004436">
    <property type="term" value="F:phosphatidylinositol diacylglycerol-lyase activity"/>
    <property type="evidence" value="ECO:0007669"/>
    <property type="project" value="UniProtKB-EC"/>
</dbReference>
<dbReference type="GO" id="GO:0008081">
    <property type="term" value="F:phosphoric diester hydrolase activity"/>
    <property type="evidence" value="ECO:0007669"/>
    <property type="project" value="InterPro"/>
</dbReference>
<dbReference type="GO" id="GO:0016042">
    <property type="term" value="P:lipid catabolic process"/>
    <property type="evidence" value="ECO:0007669"/>
    <property type="project" value="UniProtKB-KW"/>
</dbReference>
<dbReference type="CDD" id="cd00137">
    <property type="entry name" value="PI-PLCc"/>
    <property type="match status" value="1"/>
</dbReference>
<dbReference type="FunFam" id="3.20.20.190:FF:000030">
    <property type="entry name" value="1-phosphatidylinositol phosphodiesterase"/>
    <property type="match status" value="1"/>
</dbReference>
<dbReference type="Gene3D" id="3.20.20.190">
    <property type="entry name" value="Phosphatidylinositol (PI) phosphodiesterase"/>
    <property type="match status" value="1"/>
</dbReference>
<dbReference type="InterPro" id="IPR051057">
    <property type="entry name" value="PI-PLC_domain"/>
</dbReference>
<dbReference type="InterPro" id="IPR017946">
    <property type="entry name" value="PLC-like_Pdiesterase_TIM-brl"/>
</dbReference>
<dbReference type="InterPro" id="IPR000909">
    <property type="entry name" value="PLipase_C_PInositol-sp_X_dom"/>
</dbReference>
<dbReference type="PANTHER" id="PTHR13593">
    <property type="match status" value="1"/>
</dbReference>
<dbReference type="PANTHER" id="PTHR13593:SF113">
    <property type="entry name" value="SI:DKEY-266F7.9"/>
    <property type="match status" value="1"/>
</dbReference>
<dbReference type="Pfam" id="PF00388">
    <property type="entry name" value="PI-PLC-X"/>
    <property type="match status" value="1"/>
</dbReference>
<dbReference type="SMART" id="SM00148">
    <property type="entry name" value="PLCXc"/>
    <property type="match status" value="1"/>
</dbReference>
<dbReference type="SUPFAM" id="SSF51695">
    <property type="entry name" value="PLC-like phosphodiesterases"/>
    <property type="match status" value="1"/>
</dbReference>
<dbReference type="PROSITE" id="PS50007">
    <property type="entry name" value="PIPLC_X_DOMAIN"/>
    <property type="match status" value="1"/>
</dbReference>
<feature type="signal peptide">
    <location>
        <begin position="1"/>
        <end position="31"/>
    </location>
</feature>
<feature type="chain" id="PRO_0000024295" description="1-phosphatidylinositol phosphodiesterase">
    <location>
        <begin position="32"/>
        <end position="329"/>
    </location>
</feature>
<feature type="domain" description="PI-PLC X-box" evidence="1">
    <location>
        <begin position="51"/>
        <end position="194"/>
    </location>
</feature>
<feature type="active site" description="Proton acceptor" evidence="1">
    <location>
        <position position="63"/>
    </location>
</feature>
<feature type="active site" description="Proton donor" evidence="1">
    <location>
        <position position="113"/>
    </location>
</feature>
<feature type="helix" evidence="4">
    <location>
        <begin position="35"/>
        <end position="39"/>
    </location>
</feature>
<feature type="strand" evidence="2">
    <location>
        <begin position="41"/>
        <end position="43"/>
    </location>
</feature>
<feature type="turn" evidence="4">
    <location>
        <begin position="44"/>
        <end position="47"/>
    </location>
</feature>
<feature type="turn" evidence="4">
    <location>
        <begin position="54"/>
        <end position="56"/>
    </location>
</feature>
<feature type="strand" evidence="4">
    <location>
        <begin position="59"/>
        <end position="62"/>
    </location>
</feature>
<feature type="turn" evidence="4">
    <location>
        <begin position="63"/>
        <end position="66"/>
    </location>
</feature>
<feature type="helix" evidence="3">
    <location>
        <begin position="68"/>
        <end position="71"/>
    </location>
</feature>
<feature type="helix" evidence="4">
    <location>
        <begin position="73"/>
        <end position="79"/>
    </location>
</feature>
<feature type="helix" evidence="4">
    <location>
        <begin position="86"/>
        <end position="91"/>
    </location>
</feature>
<feature type="strand" evidence="4">
    <location>
        <begin position="96"/>
        <end position="103"/>
    </location>
</feature>
<feature type="strand" evidence="4">
    <location>
        <begin position="109"/>
        <end position="113"/>
    </location>
</feature>
<feature type="strand" evidence="4">
    <location>
        <begin position="116"/>
        <end position="121"/>
    </location>
</feature>
<feature type="helix" evidence="4">
    <location>
        <begin position="122"/>
        <end position="135"/>
    </location>
</feature>
<feature type="strand" evidence="4">
    <location>
        <begin position="141"/>
        <end position="147"/>
    </location>
</feature>
<feature type="helix" evidence="4">
    <location>
        <begin position="159"/>
        <end position="166"/>
    </location>
</feature>
<feature type="turn" evidence="4">
    <location>
        <begin position="167"/>
        <end position="169"/>
    </location>
</feature>
<feature type="helix" evidence="4">
    <location>
        <begin position="182"/>
        <end position="185"/>
    </location>
</feature>
<feature type="strand" evidence="4">
    <location>
        <begin position="188"/>
        <end position="196"/>
    </location>
</feature>
<feature type="strand" evidence="4">
    <location>
        <begin position="213"/>
        <end position="218"/>
    </location>
</feature>
<feature type="strand" evidence="4">
    <location>
        <begin position="220"/>
        <end position="222"/>
    </location>
</feature>
<feature type="strand" evidence="4">
    <location>
        <begin position="224"/>
        <end position="228"/>
    </location>
</feature>
<feature type="helix" evidence="4">
    <location>
        <begin position="235"/>
        <end position="250"/>
    </location>
</feature>
<feature type="turn" evidence="4">
    <location>
        <begin position="251"/>
        <end position="254"/>
    </location>
</feature>
<feature type="strand" evidence="4">
    <location>
        <begin position="258"/>
        <end position="263"/>
    </location>
</feature>
<feature type="helix" evidence="4">
    <location>
        <begin position="272"/>
        <end position="274"/>
    </location>
</feature>
<feature type="helix" evidence="4">
    <location>
        <begin position="276"/>
        <end position="294"/>
    </location>
</feature>
<feature type="strand" evidence="4">
    <location>
        <begin position="301"/>
        <end position="305"/>
    </location>
</feature>
<feature type="strand" evidence="4">
    <location>
        <begin position="308"/>
        <end position="313"/>
    </location>
</feature>
<feature type="helix" evidence="4">
    <location>
        <begin position="315"/>
        <end position="321"/>
    </location>
</feature>
<feature type="helix" evidence="4">
    <location>
        <begin position="322"/>
        <end position="326"/>
    </location>
</feature>
<keyword id="KW-0002">3D-structure</keyword>
<keyword id="KW-0903">Direct protein sequencing</keyword>
<keyword id="KW-0442">Lipid degradation</keyword>
<keyword id="KW-0443">Lipid metabolism</keyword>
<keyword id="KW-0456">Lyase</keyword>
<keyword id="KW-0964">Secreted</keyword>
<keyword id="KW-0732">Signal</keyword>
<reference key="1">
    <citation type="journal article" date="1988" name="Nucleic Acids Res.">
        <title>Sequence of the Bacillus thuringiensis phosphatidylinositol specific phospholipase C.</title>
        <authorList>
            <person name="Henner D.J."/>
            <person name="Yang M."/>
            <person name="Chen E."/>
            <person name="Helmiss R."/>
            <person name="Rodriguez H."/>
            <person name="Low M.G."/>
        </authorList>
    </citation>
    <scope>NUCLEOTIDE SEQUENCE [GENOMIC DNA]</scope>
    <scope>PARTIAL PROTEIN SEQUENCE</scope>
    <source>
        <strain>ATCC 10792 / DSM 2046 / LMG 7138 / NCIMB 9134 / NRRL HD-735</strain>
    </source>
</reference>
<reference key="2">
    <citation type="journal article" date="1989" name="Mol. Microbiol.">
        <title>Molecular characterization and sequence of phosphatidylinositol-specific phospholipase C of Bacillus thuringiensis.</title>
        <authorList>
            <person name="Lechner M."/>
            <person name="Kupke T."/>
            <person name="Kaim G."/>
            <person name="Stefanovic S."/>
            <person name="Goetz F."/>
        </authorList>
    </citation>
    <scope>NUCLEOTIDE SEQUENCE [GENOMIC DNA]</scope>
    <source>
        <strain>ATCC 10792 / DSM 2046 / LMG 7138 / NCIMB 9134 / NRRL HD-735</strain>
    </source>
</reference>
<sequence length="329" mass="38091">MSNKKLILKLFICSTIFITFVFALHDKRVVAASSVNELENWSKWMQPIPDNIPLARISIPGTHDSGTFKLQNPIKQVWGMTQEYDFRYQMDHGARIFDIRGRLTDDNTIVLHHGPLYLYVTLHEFINEAKQFLKDNPSETIIMSLKKEYEDMKGAEGSFSSTFEKNYFVDPIFLKTEGNIKLGDARGKIVLLKRYSGSNESGGYNNFYWPDNETFTTTVNQNVNVTVQDKYKVNYDEKVKSIKDTMDETMNNSEDLNHLYINFTSLSSGGTAWNSPYYYASYINPEIANDIKQKNPTRVGWVIQDYINEKWSPLLYQEVIRANKSLIKE</sequence>
<name>PLC_BACTU</name>
<protein>
    <recommendedName>
        <fullName>1-phosphatidylinositol phosphodiesterase</fullName>
        <ecNumber>4.6.1.13</ecNumber>
    </recommendedName>
    <alternativeName>
        <fullName>Phosphatidylinositol diacylglycerol-lyase</fullName>
    </alternativeName>
    <alternativeName>
        <fullName>Phosphatidylinositol-specific phospholipase C</fullName>
        <shortName>PI-PLC</shortName>
    </alternativeName>
</protein>
<proteinExistence type="evidence at protein level"/>
<comment type="function">
    <text>Cleaves glycosylphosphatidylinositol (GPI) and phosphatidylinositol (PI) anchors but not PI phosphates.</text>
</comment>
<comment type="catalytic activity">
    <reaction>
        <text>a 1,2-diacyl-sn-glycero-3-phospho-(1D-myo-inositol) = 1D-myo-inositol 1,2-cyclic phosphate + a 1,2-diacyl-sn-glycerol</text>
        <dbReference type="Rhea" id="RHEA:17093"/>
        <dbReference type="ChEBI" id="CHEBI:17815"/>
        <dbReference type="ChEBI" id="CHEBI:57880"/>
        <dbReference type="ChEBI" id="CHEBI:58484"/>
        <dbReference type="EC" id="4.6.1.13"/>
    </reaction>
</comment>
<comment type="subcellular location">
    <subcellularLocation>
        <location>Secreted</location>
    </subcellularLocation>
</comment>
<accession>P08954</accession>